<feature type="chain" id="PRO_1000116447" description="Adenylosuccinate synthetase">
    <location>
        <begin position="1"/>
        <end position="431"/>
    </location>
</feature>
<feature type="active site" description="Proton acceptor" evidence="1">
    <location>
        <position position="13"/>
    </location>
</feature>
<feature type="active site" description="Proton donor" evidence="1">
    <location>
        <position position="41"/>
    </location>
</feature>
<feature type="binding site" evidence="1">
    <location>
        <begin position="12"/>
        <end position="18"/>
    </location>
    <ligand>
        <name>GTP</name>
        <dbReference type="ChEBI" id="CHEBI:37565"/>
    </ligand>
</feature>
<feature type="binding site" description="in other chain" evidence="1">
    <location>
        <begin position="13"/>
        <end position="16"/>
    </location>
    <ligand>
        <name>IMP</name>
        <dbReference type="ChEBI" id="CHEBI:58053"/>
        <note>ligand shared between dimeric partners</note>
    </ligand>
</feature>
<feature type="binding site" evidence="1">
    <location>
        <position position="13"/>
    </location>
    <ligand>
        <name>Mg(2+)</name>
        <dbReference type="ChEBI" id="CHEBI:18420"/>
    </ligand>
</feature>
<feature type="binding site" description="in other chain" evidence="1">
    <location>
        <begin position="38"/>
        <end position="41"/>
    </location>
    <ligand>
        <name>IMP</name>
        <dbReference type="ChEBI" id="CHEBI:58053"/>
        <note>ligand shared between dimeric partners</note>
    </ligand>
</feature>
<feature type="binding site" evidence="1">
    <location>
        <begin position="40"/>
        <end position="42"/>
    </location>
    <ligand>
        <name>GTP</name>
        <dbReference type="ChEBI" id="CHEBI:37565"/>
    </ligand>
</feature>
<feature type="binding site" evidence="1">
    <location>
        <position position="40"/>
    </location>
    <ligand>
        <name>Mg(2+)</name>
        <dbReference type="ChEBI" id="CHEBI:18420"/>
    </ligand>
</feature>
<feature type="binding site" description="in other chain" evidence="1">
    <location>
        <position position="131"/>
    </location>
    <ligand>
        <name>IMP</name>
        <dbReference type="ChEBI" id="CHEBI:58053"/>
        <note>ligand shared between dimeric partners</note>
    </ligand>
</feature>
<feature type="binding site" evidence="1">
    <location>
        <position position="145"/>
    </location>
    <ligand>
        <name>IMP</name>
        <dbReference type="ChEBI" id="CHEBI:58053"/>
        <note>ligand shared between dimeric partners</note>
    </ligand>
</feature>
<feature type="binding site" description="in other chain" evidence="1">
    <location>
        <position position="225"/>
    </location>
    <ligand>
        <name>IMP</name>
        <dbReference type="ChEBI" id="CHEBI:58053"/>
        <note>ligand shared between dimeric partners</note>
    </ligand>
</feature>
<feature type="binding site" description="in other chain" evidence="1">
    <location>
        <position position="240"/>
    </location>
    <ligand>
        <name>IMP</name>
        <dbReference type="ChEBI" id="CHEBI:58053"/>
        <note>ligand shared between dimeric partners</note>
    </ligand>
</feature>
<feature type="binding site" evidence="1">
    <location>
        <begin position="300"/>
        <end position="306"/>
    </location>
    <ligand>
        <name>substrate</name>
    </ligand>
</feature>
<feature type="binding site" description="in other chain" evidence="1">
    <location>
        <position position="304"/>
    </location>
    <ligand>
        <name>IMP</name>
        <dbReference type="ChEBI" id="CHEBI:58053"/>
        <note>ligand shared between dimeric partners</note>
    </ligand>
</feature>
<feature type="binding site" evidence="1">
    <location>
        <position position="306"/>
    </location>
    <ligand>
        <name>GTP</name>
        <dbReference type="ChEBI" id="CHEBI:37565"/>
    </ligand>
</feature>
<feature type="binding site" evidence="1">
    <location>
        <begin position="332"/>
        <end position="334"/>
    </location>
    <ligand>
        <name>GTP</name>
        <dbReference type="ChEBI" id="CHEBI:37565"/>
    </ligand>
</feature>
<feature type="binding site" evidence="1">
    <location>
        <begin position="414"/>
        <end position="416"/>
    </location>
    <ligand>
        <name>GTP</name>
        <dbReference type="ChEBI" id="CHEBI:37565"/>
    </ligand>
</feature>
<accession>B9J8Q9</accession>
<reference key="1">
    <citation type="journal article" date="2009" name="J. Bacteriol.">
        <title>Genome sequences of three Agrobacterium biovars help elucidate the evolution of multichromosome genomes in bacteria.</title>
        <authorList>
            <person name="Slater S.C."/>
            <person name="Goldman B.S."/>
            <person name="Goodner B."/>
            <person name="Setubal J.C."/>
            <person name="Farrand S.K."/>
            <person name="Nester E.W."/>
            <person name="Burr T.J."/>
            <person name="Banta L."/>
            <person name="Dickerman A.W."/>
            <person name="Paulsen I."/>
            <person name="Otten L."/>
            <person name="Suen G."/>
            <person name="Welch R."/>
            <person name="Almeida N.F."/>
            <person name="Arnold F."/>
            <person name="Burton O.T."/>
            <person name="Du Z."/>
            <person name="Ewing A."/>
            <person name="Godsy E."/>
            <person name="Heisel S."/>
            <person name="Houmiel K.L."/>
            <person name="Jhaveri J."/>
            <person name="Lu J."/>
            <person name="Miller N.M."/>
            <person name="Norton S."/>
            <person name="Chen Q."/>
            <person name="Phoolcharoen W."/>
            <person name="Ohlin V."/>
            <person name="Ondrusek D."/>
            <person name="Pride N."/>
            <person name="Stricklin S.L."/>
            <person name="Sun J."/>
            <person name="Wheeler C."/>
            <person name="Wilson L."/>
            <person name="Zhu H."/>
            <person name="Wood D.W."/>
        </authorList>
    </citation>
    <scope>NUCLEOTIDE SEQUENCE [LARGE SCALE GENOMIC DNA]</scope>
    <source>
        <strain>K84 / ATCC BAA-868</strain>
    </source>
</reference>
<dbReference type="EC" id="6.3.4.4" evidence="1"/>
<dbReference type="EMBL" id="CP000628">
    <property type="protein sequence ID" value="ACM27447.1"/>
    <property type="molecule type" value="Genomic_DNA"/>
</dbReference>
<dbReference type="RefSeq" id="WP_007703827.1">
    <property type="nucleotide sequence ID" value="NC_011985.1"/>
</dbReference>
<dbReference type="SMR" id="B9J8Q9"/>
<dbReference type="STRING" id="311403.Arad_3515"/>
<dbReference type="KEGG" id="ara:Arad_3515"/>
<dbReference type="eggNOG" id="COG0104">
    <property type="taxonomic scope" value="Bacteria"/>
</dbReference>
<dbReference type="HOGENOM" id="CLU_029848_0_0_5"/>
<dbReference type="UniPathway" id="UPA00075">
    <property type="reaction ID" value="UER00335"/>
</dbReference>
<dbReference type="Proteomes" id="UP000001600">
    <property type="component" value="Chromosome 1"/>
</dbReference>
<dbReference type="GO" id="GO:0005737">
    <property type="term" value="C:cytoplasm"/>
    <property type="evidence" value="ECO:0007669"/>
    <property type="project" value="UniProtKB-SubCell"/>
</dbReference>
<dbReference type="GO" id="GO:0004019">
    <property type="term" value="F:adenylosuccinate synthase activity"/>
    <property type="evidence" value="ECO:0007669"/>
    <property type="project" value="UniProtKB-UniRule"/>
</dbReference>
<dbReference type="GO" id="GO:0005525">
    <property type="term" value="F:GTP binding"/>
    <property type="evidence" value="ECO:0007669"/>
    <property type="project" value="UniProtKB-UniRule"/>
</dbReference>
<dbReference type="GO" id="GO:0000287">
    <property type="term" value="F:magnesium ion binding"/>
    <property type="evidence" value="ECO:0007669"/>
    <property type="project" value="UniProtKB-UniRule"/>
</dbReference>
<dbReference type="GO" id="GO:0044208">
    <property type="term" value="P:'de novo' AMP biosynthetic process"/>
    <property type="evidence" value="ECO:0007669"/>
    <property type="project" value="UniProtKB-UniRule"/>
</dbReference>
<dbReference type="GO" id="GO:0046040">
    <property type="term" value="P:IMP metabolic process"/>
    <property type="evidence" value="ECO:0007669"/>
    <property type="project" value="TreeGrafter"/>
</dbReference>
<dbReference type="CDD" id="cd03108">
    <property type="entry name" value="AdSS"/>
    <property type="match status" value="1"/>
</dbReference>
<dbReference type="FunFam" id="1.10.300.10:FF:000001">
    <property type="entry name" value="Adenylosuccinate synthetase"/>
    <property type="match status" value="1"/>
</dbReference>
<dbReference type="FunFam" id="3.90.170.10:FF:000001">
    <property type="entry name" value="Adenylosuccinate synthetase"/>
    <property type="match status" value="1"/>
</dbReference>
<dbReference type="Gene3D" id="3.40.440.10">
    <property type="entry name" value="Adenylosuccinate Synthetase, subunit A, domain 1"/>
    <property type="match status" value="1"/>
</dbReference>
<dbReference type="Gene3D" id="1.10.300.10">
    <property type="entry name" value="Adenylosuccinate Synthetase, subunit A, domain 2"/>
    <property type="match status" value="1"/>
</dbReference>
<dbReference type="Gene3D" id="3.90.170.10">
    <property type="entry name" value="Adenylosuccinate Synthetase, subunit A, domain 3"/>
    <property type="match status" value="1"/>
</dbReference>
<dbReference type="HAMAP" id="MF_00011">
    <property type="entry name" value="Adenylosucc_synth"/>
    <property type="match status" value="1"/>
</dbReference>
<dbReference type="InterPro" id="IPR018220">
    <property type="entry name" value="Adenylosuccin_syn_GTP-bd"/>
</dbReference>
<dbReference type="InterPro" id="IPR033128">
    <property type="entry name" value="Adenylosuccin_syn_Lys_AS"/>
</dbReference>
<dbReference type="InterPro" id="IPR042109">
    <property type="entry name" value="Adenylosuccinate_synth_dom1"/>
</dbReference>
<dbReference type="InterPro" id="IPR042110">
    <property type="entry name" value="Adenylosuccinate_synth_dom2"/>
</dbReference>
<dbReference type="InterPro" id="IPR042111">
    <property type="entry name" value="Adenylosuccinate_synth_dom3"/>
</dbReference>
<dbReference type="InterPro" id="IPR001114">
    <property type="entry name" value="Adenylosuccinate_synthetase"/>
</dbReference>
<dbReference type="InterPro" id="IPR027417">
    <property type="entry name" value="P-loop_NTPase"/>
</dbReference>
<dbReference type="NCBIfam" id="NF002223">
    <property type="entry name" value="PRK01117.1"/>
    <property type="match status" value="1"/>
</dbReference>
<dbReference type="NCBIfam" id="TIGR00184">
    <property type="entry name" value="purA"/>
    <property type="match status" value="1"/>
</dbReference>
<dbReference type="PANTHER" id="PTHR11846">
    <property type="entry name" value="ADENYLOSUCCINATE SYNTHETASE"/>
    <property type="match status" value="1"/>
</dbReference>
<dbReference type="PANTHER" id="PTHR11846:SF0">
    <property type="entry name" value="ADENYLOSUCCINATE SYNTHETASE"/>
    <property type="match status" value="1"/>
</dbReference>
<dbReference type="Pfam" id="PF00709">
    <property type="entry name" value="Adenylsucc_synt"/>
    <property type="match status" value="1"/>
</dbReference>
<dbReference type="SMART" id="SM00788">
    <property type="entry name" value="Adenylsucc_synt"/>
    <property type="match status" value="1"/>
</dbReference>
<dbReference type="SUPFAM" id="SSF52540">
    <property type="entry name" value="P-loop containing nucleoside triphosphate hydrolases"/>
    <property type="match status" value="1"/>
</dbReference>
<dbReference type="PROSITE" id="PS01266">
    <property type="entry name" value="ADENYLOSUCCIN_SYN_1"/>
    <property type="match status" value="1"/>
</dbReference>
<dbReference type="PROSITE" id="PS00513">
    <property type="entry name" value="ADENYLOSUCCIN_SYN_2"/>
    <property type="match status" value="1"/>
</dbReference>
<sequence>MTNVVVIGSQWGDEGKGKIVDWLSERADVIVRFQGGHNAGHTLVVDGVSYKLALLPSGLVRGKLSVIGNGVVVDPHHFVAEVEKLRAQGIAVTPDVLRIAENAPLILSLHRDLDALREDAASNSGTKIGTTRRGIGPAYEDKVGRRAIRVIDLSEPETLPAKIDRLLTHHNALRRGMGLSEISFNALHEELTSVAEHILPYMDQVWRLLDEQRKAGARILFEGAQGALLDNDHGTYPFVTSSNTVAGQAAAGSGLGPTALGYVLGITKAYTTRVGEGPFPCELHDEIGKHLSTVGREVGVNTGRPRRCGWFDAVLVRQTVKTSGITGIALTKLDVLDGLDELKICIGYRLDGKEIDYLPSSQAAQARVEPIYITLEGWKESTVGARKWADLPAQAIKYVRQVEELIGAPVAMLSTSPEREDTILVTDPFEG</sequence>
<evidence type="ECO:0000255" key="1">
    <source>
        <dbReference type="HAMAP-Rule" id="MF_00011"/>
    </source>
</evidence>
<name>PURA_RHIR8</name>
<comment type="function">
    <text evidence="1">Plays an important role in the de novo pathway of purine nucleotide biosynthesis. Catalyzes the first committed step in the biosynthesis of AMP from IMP.</text>
</comment>
<comment type="catalytic activity">
    <reaction evidence="1">
        <text>IMP + L-aspartate + GTP = N(6)-(1,2-dicarboxyethyl)-AMP + GDP + phosphate + 2 H(+)</text>
        <dbReference type="Rhea" id="RHEA:15753"/>
        <dbReference type="ChEBI" id="CHEBI:15378"/>
        <dbReference type="ChEBI" id="CHEBI:29991"/>
        <dbReference type="ChEBI" id="CHEBI:37565"/>
        <dbReference type="ChEBI" id="CHEBI:43474"/>
        <dbReference type="ChEBI" id="CHEBI:57567"/>
        <dbReference type="ChEBI" id="CHEBI:58053"/>
        <dbReference type="ChEBI" id="CHEBI:58189"/>
        <dbReference type="EC" id="6.3.4.4"/>
    </reaction>
</comment>
<comment type="cofactor">
    <cofactor evidence="1">
        <name>Mg(2+)</name>
        <dbReference type="ChEBI" id="CHEBI:18420"/>
    </cofactor>
    <text evidence="1">Binds 1 Mg(2+) ion per subunit.</text>
</comment>
<comment type="pathway">
    <text evidence="1">Purine metabolism; AMP biosynthesis via de novo pathway; AMP from IMP: step 1/2.</text>
</comment>
<comment type="subunit">
    <text evidence="1">Homodimer.</text>
</comment>
<comment type="subcellular location">
    <subcellularLocation>
        <location evidence="1">Cytoplasm</location>
    </subcellularLocation>
</comment>
<comment type="similarity">
    <text evidence="1">Belongs to the adenylosuccinate synthetase family.</text>
</comment>
<protein>
    <recommendedName>
        <fullName evidence="1">Adenylosuccinate synthetase</fullName>
        <shortName evidence="1">AMPSase</shortName>
        <shortName evidence="1">AdSS</shortName>
        <ecNumber evidence="1">6.3.4.4</ecNumber>
    </recommendedName>
    <alternativeName>
        <fullName evidence="1">IMP--aspartate ligase</fullName>
    </alternativeName>
</protein>
<gene>
    <name evidence="1" type="primary">purA</name>
    <name type="ordered locus">Arad_3515</name>
</gene>
<keyword id="KW-0963">Cytoplasm</keyword>
<keyword id="KW-0342">GTP-binding</keyword>
<keyword id="KW-0436">Ligase</keyword>
<keyword id="KW-0460">Magnesium</keyword>
<keyword id="KW-0479">Metal-binding</keyword>
<keyword id="KW-0547">Nucleotide-binding</keyword>
<keyword id="KW-0658">Purine biosynthesis</keyword>
<organism>
    <name type="scientific">Rhizobium rhizogenes (strain K84 / ATCC BAA-868)</name>
    <name type="common">Agrobacterium radiobacter</name>
    <dbReference type="NCBI Taxonomy" id="311403"/>
    <lineage>
        <taxon>Bacteria</taxon>
        <taxon>Pseudomonadati</taxon>
        <taxon>Pseudomonadota</taxon>
        <taxon>Alphaproteobacteria</taxon>
        <taxon>Hyphomicrobiales</taxon>
        <taxon>Rhizobiaceae</taxon>
        <taxon>Rhizobium/Agrobacterium group</taxon>
        <taxon>Rhizobium</taxon>
    </lineage>
</organism>
<proteinExistence type="inferred from homology"/>